<comment type="function">
    <text evidence="1">Catalyzes carboxymethyl transfer from carboxy-S-adenosyl-L-methionine (Cx-SAM) to 5-hydroxyuridine (ho5U) to form 5-carboxymethoxyuridine (cmo5U) at position 34 in tRNAs.</text>
</comment>
<comment type="catalytic activity">
    <reaction evidence="1">
        <text>carboxy-S-adenosyl-L-methionine + 5-hydroxyuridine(34) in tRNA = 5-carboxymethoxyuridine(34) in tRNA + S-adenosyl-L-homocysteine + H(+)</text>
        <dbReference type="Rhea" id="RHEA:52848"/>
        <dbReference type="Rhea" id="RHEA-COMP:13381"/>
        <dbReference type="Rhea" id="RHEA-COMP:13383"/>
        <dbReference type="ChEBI" id="CHEBI:15378"/>
        <dbReference type="ChEBI" id="CHEBI:57856"/>
        <dbReference type="ChEBI" id="CHEBI:134278"/>
        <dbReference type="ChEBI" id="CHEBI:136877"/>
        <dbReference type="ChEBI" id="CHEBI:136879"/>
    </reaction>
</comment>
<comment type="subunit">
    <text evidence="1">Homotetramer.</text>
</comment>
<comment type="similarity">
    <text evidence="1">Belongs to the class I-like SAM-binding methyltransferase superfamily. CmoB family.</text>
</comment>
<name>CMOB_SHEB5</name>
<accession>A3D474</accession>
<protein>
    <recommendedName>
        <fullName evidence="1">tRNA U34 carboxymethyltransferase</fullName>
        <ecNumber evidence="1">2.5.1.-</ecNumber>
    </recommendedName>
</protein>
<evidence type="ECO:0000255" key="1">
    <source>
        <dbReference type="HAMAP-Rule" id="MF_01590"/>
    </source>
</evidence>
<feature type="chain" id="PRO_0000313964" description="tRNA U34 carboxymethyltransferase">
    <location>
        <begin position="1"/>
        <end position="331"/>
    </location>
</feature>
<feature type="binding site" evidence="1">
    <location>
        <position position="91"/>
    </location>
    <ligand>
        <name>carboxy-S-adenosyl-L-methionine</name>
        <dbReference type="ChEBI" id="CHEBI:134278"/>
    </ligand>
</feature>
<feature type="binding site" evidence="1">
    <location>
        <position position="105"/>
    </location>
    <ligand>
        <name>carboxy-S-adenosyl-L-methionine</name>
        <dbReference type="ChEBI" id="CHEBI:134278"/>
    </ligand>
</feature>
<feature type="binding site" evidence="1">
    <location>
        <position position="110"/>
    </location>
    <ligand>
        <name>carboxy-S-adenosyl-L-methionine</name>
        <dbReference type="ChEBI" id="CHEBI:134278"/>
    </ligand>
</feature>
<feature type="binding site" evidence="1">
    <location>
        <position position="130"/>
    </location>
    <ligand>
        <name>carboxy-S-adenosyl-L-methionine</name>
        <dbReference type="ChEBI" id="CHEBI:134278"/>
    </ligand>
</feature>
<feature type="binding site" evidence="1">
    <location>
        <begin position="152"/>
        <end position="154"/>
    </location>
    <ligand>
        <name>carboxy-S-adenosyl-L-methionine</name>
        <dbReference type="ChEBI" id="CHEBI:134278"/>
    </ligand>
</feature>
<feature type="binding site" evidence="1">
    <location>
        <begin position="181"/>
        <end position="182"/>
    </location>
    <ligand>
        <name>carboxy-S-adenosyl-L-methionine</name>
        <dbReference type="ChEBI" id="CHEBI:134278"/>
    </ligand>
</feature>
<feature type="binding site" evidence="1">
    <location>
        <position position="196"/>
    </location>
    <ligand>
        <name>carboxy-S-adenosyl-L-methionine</name>
        <dbReference type="ChEBI" id="CHEBI:134278"/>
    </ligand>
</feature>
<feature type="binding site" evidence="1">
    <location>
        <position position="200"/>
    </location>
    <ligand>
        <name>carboxy-S-adenosyl-L-methionine</name>
        <dbReference type="ChEBI" id="CHEBI:134278"/>
    </ligand>
</feature>
<feature type="binding site" evidence="1">
    <location>
        <position position="315"/>
    </location>
    <ligand>
        <name>carboxy-S-adenosyl-L-methionine</name>
        <dbReference type="ChEBI" id="CHEBI:134278"/>
    </ligand>
</feature>
<proteinExistence type="inferred from homology"/>
<gene>
    <name evidence="1" type="primary">cmoB</name>
    <name type="ordered locus">Sbal_2035</name>
</gene>
<reference key="1">
    <citation type="submission" date="2007-02" db="EMBL/GenBank/DDBJ databases">
        <title>Complete sequence of chromosome of Shewanella baltica OS155.</title>
        <authorList>
            <consortium name="US DOE Joint Genome Institute"/>
            <person name="Copeland A."/>
            <person name="Lucas S."/>
            <person name="Lapidus A."/>
            <person name="Barry K."/>
            <person name="Detter J.C."/>
            <person name="Glavina del Rio T."/>
            <person name="Hammon N."/>
            <person name="Israni S."/>
            <person name="Dalin E."/>
            <person name="Tice H."/>
            <person name="Pitluck S."/>
            <person name="Sims D.R."/>
            <person name="Brettin T."/>
            <person name="Bruce D."/>
            <person name="Han C."/>
            <person name="Tapia R."/>
            <person name="Brainard J."/>
            <person name="Schmutz J."/>
            <person name="Larimer F."/>
            <person name="Land M."/>
            <person name="Hauser L."/>
            <person name="Kyrpides N."/>
            <person name="Mikhailova N."/>
            <person name="Brettar I."/>
            <person name="Klappenbach J."/>
            <person name="Konstantinidis K."/>
            <person name="Rodrigues J."/>
            <person name="Tiedje J."/>
            <person name="Richardson P."/>
        </authorList>
    </citation>
    <scope>NUCLEOTIDE SEQUENCE [LARGE SCALE GENOMIC DNA]</scope>
    <source>
        <strain>OS155 / ATCC BAA-1091</strain>
    </source>
</reference>
<keyword id="KW-1185">Reference proteome</keyword>
<keyword id="KW-0808">Transferase</keyword>
<keyword id="KW-0819">tRNA processing</keyword>
<dbReference type="EC" id="2.5.1.-" evidence="1"/>
<dbReference type="EMBL" id="CP000563">
    <property type="protein sequence ID" value="ABN61537.1"/>
    <property type="molecule type" value="Genomic_DNA"/>
</dbReference>
<dbReference type="RefSeq" id="WP_011846752.1">
    <property type="nucleotide sequence ID" value="NC_009052.1"/>
</dbReference>
<dbReference type="SMR" id="A3D474"/>
<dbReference type="STRING" id="325240.Sbal_2035"/>
<dbReference type="KEGG" id="sbl:Sbal_2035"/>
<dbReference type="HOGENOM" id="CLU_052665_0_0_6"/>
<dbReference type="OrthoDB" id="9773188at2"/>
<dbReference type="Proteomes" id="UP000001557">
    <property type="component" value="Chromosome"/>
</dbReference>
<dbReference type="GO" id="GO:0008168">
    <property type="term" value="F:methyltransferase activity"/>
    <property type="evidence" value="ECO:0007669"/>
    <property type="project" value="TreeGrafter"/>
</dbReference>
<dbReference type="GO" id="GO:0016765">
    <property type="term" value="F:transferase activity, transferring alkyl or aryl (other than methyl) groups"/>
    <property type="evidence" value="ECO:0007669"/>
    <property type="project" value="UniProtKB-UniRule"/>
</dbReference>
<dbReference type="GO" id="GO:0002098">
    <property type="term" value="P:tRNA wobble uridine modification"/>
    <property type="evidence" value="ECO:0007669"/>
    <property type="project" value="InterPro"/>
</dbReference>
<dbReference type="CDD" id="cd02440">
    <property type="entry name" value="AdoMet_MTases"/>
    <property type="match status" value="1"/>
</dbReference>
<dbReference type="Gene3D" id="3.40.50.150">
    <property type="entry name" value="Vaccinia Virus protein VP39"/>
    <property type="match status" value="1"/>
</dbReference>
<dbReference type="HAMAP" id="MF_01590">
    <property type="entry name" value="tRNA_carboxymethyltr_CmoB"/>
    <property type="match status" value="1"/>
</dbReference>
<dbReference type="InterPro" id="IPR010017">
    <property type="entry name" value="CmoB"/>
</dbReference>
<dbReference type="InterPro" id="IPR027555">
    <property type="entry name" value="Mo5U34_MeTrfas-like"/>
</dbReference>
<dbReference type="InterPro" id="IPR029063">
    <property type="entry name" value="SAM-dependent_MTases_sf"/>
</dbReference>
<dbReference type="NCBIfam" id="NF011650">
    <property type="entry name" value="PRK15068.1"/>
    <property type="match status" value="1"/>
</dbReference>
<dbReference type="NCBIfam" id="TIGR00452">
    <property type="entry name" value="tRNA 5-methoxyuridine(34)/uridine 5-oxyacetic acid(34) synthase CmoB"/>
    <property type="match status" value="1"/>
</dbReference>
<dbReference type="PANTHER" id="PTHR43464">
    <property type="entry name" value="METHYLTRANSFERASE"/>
    <property type="match status" value="1"/>
</dbReference>
<dbReference type="PANTHER" id="PTHR43464:SF95">
    <property type="entry name" value="TRNA U34 CARBOXYMETHYLTRANSFERASE"/>
    <property type="match status" value="1"/>
</dbReference>
<dbReference type="Pfam" id="PF08003">
    <property type="entry name" value="Methyltransf_9"/>
    <property type="match status" value="1"/>
</dbReference>
<dbReference type="SUPFAM" id="SSF53335">
    <property type="entry name" value="S-adenosyl-L-methionine-dependent methyltransferases"/>
    <property type="match status" value="1"/>
</dbReference>
<organism>
    <name type="scientific">Shewanella baltica (strain OS155 / ATCC BAA-1091)</name>
    <dbReference type="NCBI Taxonomy" id="325240"/>
    <lineage>
        <taxon>Bacteria</taxon>
        <taxon>Pseudomonadati</taxon>
        <taxon>Pseudomonadota</taxon>
        <taxon>Gammaproteobacteria</taxon>
        <taxon>Alteromonadales</taxon>
        <taxon>Shewanellaceae</taxon>
        <taxon>Shewanella</taxon>
    </lineage>
</organism>
<sequence length="331" mass="37935">MISFSSFYQQIADSNLQHWLETLPSILGKWQRDHKHGNLPKWEKVLNKLHYPAPDQVDFIDSVTVGSGEQLSPGEKEKLENLLRLFMPWRKGPFHIHGIHIDTEWRSDWKWDRVKQHISPLKNRTVLDVGCGSGYHMWRMLGSGAKRVVGIDPSPLFLCQFEAVKRLAGTHHPVHLLPLGIEELPPLDAFDTVFSMGVLYHRRSPIDHLLQLRDQLRTGGELVLETLVIDGDENAVLVPQDRYGKMNNVWFIPSVAALMLWLKKCDFTDIRCVDTDVTALAEQRRTDWMPNESLVEYLDPNDITKTVEGYPAPKRATIIAVKNQPNQDLIS</sequence>